<feature type="chain" id="PRO_0000169606" description="Uncharacterized protein YibI">
    <location>
        <begin position="1"/>
        <end position="120"/>
    </location>
</feature>
<name>YIBI_ECOLI</name>
<gene>
    <name type="primary">yibI</name>
    <name type="ordered locus">b3598</name>
    <name type="ordered locus">JW3572</name>
</gene>
<accession>P32108</accession>
<accession>Q2M7R1</accession>
<dbReference type="EMBL" id="L19044">
    <property type="protein sequence ID" value="AAC95069.1"/>
    <property type="molecule type" value="Genomic_DNA"/>
</dbReference>
<dbReference type="EMBL" id="U00039">
    <property type="protein sequence ID" value="AAB18575.1"/>
    <property type="molecule type" value="Genomic_DNA"/>
</dbReference>
<dbReference type="EMBL" id="U00096">
    <property type="protein sequence ID" value="AAC76622.1"/>
    <property type="molecule type" value="Genomic_DNA"/>
</dbReference>
<dbReference type="EMBL" id="AP009048">
    <property type="protein sequence ID" value="BAE77695.1"/>
    <property type="molecule type" value="Genomic_DNA"/>
</dbReference>
<dbReference type="PIR" id="S47819">
    <property type="entry name" value="S47819"/>
</dbReference>
<dbReference type="RefSeq" id="NP_418055.1">
    <property type="nucleotide sequence ID" value="NC_000913.3"/>
</dbReference>
<dbReference type="RefSeq" id="WP_000479624.1">
    <property type="nucleotide sequence ID" value="NZ_SSZK01000022.1"/>
</dbReference>
<dbReference type="SMR" id="P32108"/>
<dbReference type="BioGRID" id="4262558">
    <property type="interactions" value="8"/>
</dbReference>
<dbReference type="FunCoup" id="P32108">
    <property type="interactions" value="102"/>
</dbReference>
<dbReference type="STRING" id="511145.b3598"/>
<dbReference type="TCDB" id="9.B.32.1.1">
    <property type="family name" value="the duf3302 or pfam11742 (yibi) family"/>
</dbReference>
<dbReference type="PaxDb" id="511145-b3598"/>
<dbReference type="EnsemblBacteria" id="AAC76622">
    <property type="protein sequence ID" value="AAC76622"/>
    <property type="gene ID" value="b3598"/>
</dbReference>
<dbReference type="GeneID" id="948109"/>
<dbReference type="KEGG" id="ecj:JW3572"/>
<dbReference type="KEGG" id="eco:b3598"/>
<dbReference type="KEGG" id="ecoc:C3026_19510"/>
<dbReference type="PATRIC" id="fig|1411691.4.peg.3109"/>
<dbReference type="EchoBASE" id="EB1715"/>
<dbReference type="eggNOG" id="ENOG5032S89">
    <property type="taxonomic scope" value="Bacteria"/>
</dbReference>
<dbReference type="HOGENOM" id="CLU_143375_0_0_6"/>
<dbReference type="InParanoid" id="P32108"/>
<dbReference type="OMA" id="LHVAGWV"/>
<dbReference type="OrthoDB" id="5741122at2"/>
<dbReference type="PhylomeDB" id="P32108"/>
<dbReference type="BioCyc" id="EcoCyc:EG11765-MONOMER"/>
<dbReference type="PRO" id="PR:P32108"/>
<dbReference type="Proteomes" id="UP000000625">
    <property type="component" value="Chromosome"/>
</dbReference>
<dbReference type="GO" id="GO:0005886">
    <property type="term" value="C:plasma membrane"/>
    <property type="evidence" value="ECO:0000314"/>
    <property type="project" value="EcoCyc"/>
</dbReference>
<dbReference type="InterPro" id="IPR011223">
    <property type="entry name" value="UCP028770"/>
</dbReference>
<dbReference type="Pfam" id="PF11742">
    <property type="entry name" value="DUF3302"/>
    <property type="match status" value="1"/>
</dbReference>
<dbReference type="PIRSF" id="PIRSF028770">
    <property type="entry name" value="UCP028770"/>
    <property type="match status" value="1"/>
</dbReference>
<evidence type="ECO:0000305" key="1"/>
<reference key="1">
    <citation type="journal article" date="1993" name="J. Bacteriol.">
        <title>Rhs elements of Escherichia coli K-12: complex composites of shared and unique components that have different evolutionary histories.</title>
        <authorList>
            <person name="Zhao S."/>
            <person name="Sandt C.H."/>
            <person name="Feulner G."/>
            <person name="Vlazny D.A."/>
            <person name="Gray J.A."/>
            <person name="Hill C.W."/>
        </authorList>
    </citation>
    <scope>NUCLEOTIDE SEQUENCE [GENOMIC DNA]</scope>
    <source>
        <strain>K12</strain>
    </source>
</reference>
<reference key="2">
    <citation type="journal article" date="1994" name="Nucleic Acids Res.">
        <title>Analysis of the Escherichia coli genome. V. DNA sequence of the region from 76.0 to 81.5 minutes.</title>
        <authorList>
            <person name="Sofia H.J."/>
            <person name="Burland V."/>
            <person name="Daniels D.L."/>
            <person name="Plunkett G. III"/>
            <person name="Blattner F.R."/>
        </authorList>
    </citation>
    <scope>NUCLEOTIDE SEQUENCE [LARGE SCALE GENOMIC DNA]</scope>
    <source>
        <strain>K12 / MG1655 / ATCC 47076</strain>
    </source>
</reference>
<reference key="3">
    <citation type="journal article" date="1997" name="Science">
        <title>The complete genome sequence of Escherichia coli K-12.</title>
        <authorList>
            <person name="Blattner F.R."/>
            <person name="Plunkett G. III"/>
            <person name="Bloch C.A."/>
            <person name="Perna N.T."/>
            <person name="Burland V."/>
            <person name="Riley M."/>
            <person name="Collado-Vides J."/>
            <person name="Glasner J.D."/>
            <person name="Rode C.K."/>
            <person name="Mayhew G.F."/>
            <person name="Gregor J."/>
            <person name="Davis N.W."/>
            <person name="Kirkpatrick H.A."/>
            <person name="Goeden M.A."/>
            <person name="Rose D.J."/>
            <person name="Mau B."/>
            <person name="Shao Y."/>
        </authorList>
    </citation>
    <scope>NUCLEOTIDE SEQUENCE [LARGE SCALE GENOMIC DNA]</scope>
    <source>
        <strain>K12 / MG1655 / ATCC 47076</strain>
    </source>
</reference>
<reference key="4">
    <citation type="journal article" date="2006" name="Mol. Syst. Biol.">
        <title>Highly accurate genome sequences of Escherichia coli K-12 strains MG1655 and W3110.</title>
        <authorList>
            <person name="Hayashi K."/>
            <person name="Morooka N."/>
            <person name="Yamamoto Y."/>
            <person name="Fujita K."/>
            <person name="Isono K."/>
            <person name="Choi S."/>
            <person name="Ohtsubo E."/>
            <person name="Baba T."/>
            <person name="Wanner B.L."/>
            <person name="Mori H."/>
            <person name="Horiuchi T."/>
        </authorList>
    </citation>
    <scope>NUCLEOTIDE SEQUENCE [LARGE SCALE GENOMIC DNA]</scope>
    <source>
        <strain>K12 / W3110 / ATCC 27325 / DSM 5911</strain>
    </source>
</reference>
<sequence>MFLNYFALGVLIFVFLVIFYGIIAIHDIPYLIAKKRNHPHADAIHTAGWVSLFTLHVIWPFLWIWATLYQPERGWGMQSHVASQEKATDPEIAALSDRISRLEHQLAAEKKTDYSTFPEI</sequence>
<keyword id="KW-1185">Reference proteome</keyword>
<protein>
    <recommendedName>
        <fullName>Uncharacterized protein YibI</fullName>
    </recommendedName>
</protein>
<organism>
    <name type="scientific">Escherichia coli (strain K12)</name>
    <dbReference type="NCBI Taxonomy" id="83333"/>
    <lineage>
        <taxon>Bacteria</taxon>
        <taxon>Pseudomonadati</taxon>
        <taxon>Pseudomonadota</taxon>
        <taxon>Gammaproteobacteria</taxon>
        <taxon>Enterobacterales</taxon>
        <taxon>Enterobacteriaceae</taxon>
        <taxon>Escherichia</taxon>
    </lineage>
</organism>
<comment type="similarity">
    <text evidence="1">To E.coli YiaW.</text>
</comment>
<proteinExistence type="predicted"/>